<sequence length="142" mass="14875">MAKKVQAYVKLQVAAGMANPSPPVGPALGQQGVNIMEFCKAFNAKTDSIEKGLPIPVVITVYADRSFTFVTKTPPAAVLLKKAAGIKSGSGKPNKDKVGKISRAQLQEIAQTKAADMTGADIEAMTRSIEGTARSMGLVVED</sequence>
<name>RL11_ECO24</name>
<comment type="function">
    <text evidence="1">Forms part of the ribosomal stalk which helps the ribosome interact with GTP-bound translation factors.</text>
</comment>
<comment type="subunit">
    <text evidence="1">Part of the ribosomal stalk of the 50S ribosomal subunit. Interacts with L10 and the large rRNA to form the base of the stalk. L10 forms an elongated spine to which L12 dimers bind in a sequential fashion forming a multimeric L10(L12)X complex.</text>
</comment>
<comment type="PTM">
    <text evidence="1">One or more lysine residues are methylated.</text>
</comment>
<comment type="similarity">
    <text evidence="1">Belongs to the universal ribosomal protein uL11 family.</text>
</comment>
<protein>
    <recommendedName>
        <fullName evidence="1">Large ribosomal subunit protein uL11</fullName>
    </recommendedName>
    <alternativeName>
        <fullName evidence="2">50S ribosomal protein L11</fullName>
    </alternativeName>
</protein>
<proteinExistence type="inferred from homology"/>
<accession>A7ZUJ6</accession>
<keyword id="KW-0488">Methylation</keyword>
<keyword id="KW-1185">Reference proteome</keyword>
<keyword id="KW-0687">Ribonucleoprotein</keyword>
<keyword id="KW-0689">Ribosomal protein</keyword>
<keyword id="KW-0694">RNA-binding</keyword>
<keyword id="KW-0699">rRNA-binding</keyword>
<dbReference type="EMBL" id="CP000800">
    <property type="protein sequence ID" value="ABV17415.1"/>
    <property type="molecule type" value="Genomic_DNA"/>
</dbReference>
<dbReference type="RefSeq" id="WP_001085926.1">
    <property type="nucleotide sequence ID" value="NC_009801.1"/>
</dbReference>
<dbReference type="EMDB" id="EMD-37271"/>
<dbReference type="SMR" id="A7ZUJ6"/>
<dbReference type="GeneID" id="93777911"/>
<dbReference type="KEGG" id="ecw:EcE24377A_4523"/>
<dbReference type="HOGENOM" id="CLU_074237_2_0_6"/>
<dbReference type="Proteomes" id="UP000001122">
    <property type="component" value="Chromosome"/>
</dbReference>
<dbReference type="GO" id="GO:0022625">
    <property type="term" value="C:cytosolic large ribosomal subunit"/>
    <property type="evidence" value="ECO:0007669"/>
    <property type="project" value="TreeGrafter"/>
</dbReference>
<dbReference type="GO" id="GO:0070180">
    <property type="term" value="F:large ribosomal subunit rRNA binding"/>
    <property type="evidence" value="ECO:0007669"/>
    <property type="project" value="UniProtKB-UniRule"/>
</dbReference>
<dbReference type="GO" id="GO:0003735">
    <property type="term" value="F:structural constituent of ribosome"/>
    <property type="evidence" value="ECO:0007669"/>
    <property type="project" value="InterPro"/>
</dbReference>
<dbReference type="GO" id="GO:0006412">
    <property type="term" value="P:translation"/>
    <property type="evidence" value="ECO:0007669"/>
    <property type="project" value="UniProtKB-UniRule"/>
</dbReference>
<dbReference type="CDD" id="cd00349">
    <property type="entry name" value="Ribosomal_L11"/>
    <property type="match status" value="1"/>
</dbReference>
<dbReference type="FunFam" id="1.10.10.250:FF:000001">
    <property type="entry name" value="50S ribosomal protein L11"/>
    <property type="match status" value="1"/>
</dbReference>
<dbReference type="FunFam" id="3.30.1550.10:FF:000001">
    <property type="entry name" value="50S ribosomal protein L11"/>
    <property type="match status" value="1"/>
</dbReference>
<dbReference type="Gene3D" id="1.10.10.250">
    <property type="entry name" value="Ribosomal protein L11, C-terminal domain"/>
    <property type="match status" value="1"/>
</dbReference>
<dbReference type="Gene3D" id="3.30.1550.10">
    <property type="entry name" value="Ribosomal protein L11/L12, N-terminal domain"/>
    <property type="match status" value="1"/>
</dbReference>
<dbReference type="HAMAP" id="MF_00736">
    <property type="entry name" value="Ribosomal_uL11"/>
    <property type="match status" value="1"/>
</dbReference>
<dbReference type="InterPro" id="IPR000911">
    <property type="entry name" value="Ribosomal_uL11"/>
</dbReference>
<dbReference type="InterPro" id="IPR006519">
    <property type="entry name" value="Ribosomal_uL11_bac-typ"/>
</dbReference>
<dbReference type="InterPro" id="IPR020783">
    <property type="entry name" value="Ribosomal_uL11_C"/>
</dbReference>
<dbReference type="InterPro" id="IPR036769">
    <property type="entry name" value="Ribosomal_uL11_C_sf"/>
</dbReference>
<dbReference type="InterPro" id="IPR020785">
    <property type="entry name" value="Ribosomal_uL11_CS"/>
</dbReference>
<dbReference type="InterPro" id="IPR020784">
    <property type="entry name" value="Ribosomal_uL11_N"/>
</dbReference>
<dbReference type="InterPro" id="IPR036796">
    <property type="entry name" value="Ribosomal_uL11_N_sf"/>
</dbReference>
<dbReference type="NCBIfam" id="TIGR01632">
    <property type="entry name" value="L11_bact"/>
    <property type="match status" value="1"/>
</dbReference>
<dbReference type="PANTHER" id="PTHR11661">
    <property type="entry name" value="60S RIBOSOMAL PROTEIN L12"/>
    <property type="match status" value="1"/>
</dbReference>
<dbReference type="PANTHER" id="PTHR11661:SF1">
    <property type="entry name" value="LARGE RIBOSOMAL SUBUNIT PROTEIN UL11M"/>
    <property type="match status" value="1"/>
</dbReference>
<dbReference type="Pfam" id="PF00298">
    <property type="entry name" value="Ribosomal_L11"/>
    <property type="match status" value="1"/>
</dbReference>
<dbReference type="Pfam" id="PF03946">
    <property type="entry name" value="Ribosomal_L11_N"/>
    <property type="match status" value="1"/>
</dbReference>
<dbReference type="SMART" id="SM00649">
    <property type="entry name" value="RL11"/>
    <property type="match status" value="1"/>
</dbReference>
<dbReference type="SUPFAM" id="SSF54747">
    <property type="entry name" value="Ribosomal L11/L12e N-terminal domain"/>
    <property type="match status" value="1"/>
</dbReference>
<dbReference type="SUPFAM" id="SSF46906">
    <property type="entry name" value="Ribosomal protein L11, C-terminal domain"/>
    <property type="match status" value="1"/>
</dbReference>
<dbReference type="PROSITE" id="PS00359">
    <property type="entry name" value="RIBOSOMAL_L11"/>
    <property type="match status" value="1"/>
</dbReference>
<evidence type="ECO:0000255" key="1">
    <source>
        <dbReference type="HAMAP-Rule" id="MF_00736"/>
    </source>
</evidence>
<evidence type="ECO:0000305" key="2"/>
<organism>
    <name type="scientific">Escherichia coli O139:H28 (strain E24377A / ETEC)</name>
    <dbReference type="NCBI Taxonomy" id="331111"/>
    <lineage>
        <taxon>Bacteria</taxon>
        <taxon>Pseudomonadati</taxon>
        <taxon>Pseudomonadota</taxon>
        <taxon>Gammaproteobacteria</taxon>
        <taxon>Enterobacterales</taxon>
        <taxon>Enterobacteriaceae</taxon>
        <taxon>Escherichia</taxon>
    </lineage>
</organism>
<feature type="chain" id="PRO_1000062134" description="Large ribosomal subunit protein uL11">
    <location>
        <begin position="1"/>
        <end position="142"/>
    </location>
</feature>
<reference key="1">
    <citation type="journal article" date="2008" name="J. Bacteriol.">
        <title>The pangenome structure of Escherichia coli: comparative genomic analysis of E. coli commensal and pathogenic isolates.</title>
        <authorList>
            <person name="Rasko D.A."/>
            <person name="Rosovitz M.J."/>
            <person name="Myers G.S.A."/>
            <person name="Mongodin E.F."/>
            <person name="Fricke W.F."/>
            <person name="Gajer P."/>
            <person name="Crabtree J."/>
            <person name="Sebaihia M."/>
            <person name="Thomson N.R."/>
            <person name="Chaudhuri R."/>
            <person name="Henderson I.R."/>
            <person name="Sperandio V."/>
            <person name="Ravel J."/>
        </authorList>
    </citation>
    <scope>NUCLEOTIDE SEQUENCE [LARGE SCALE GENOMIC DNA]</scope>
    <source>
        <strain>E24377A / ETEC</strain>
    </source>
</reference>
<gene>
    <name evidence="1" type="primary">rplK</name>
    <name type="ordered locus">EcE24377A_4523</name>
</gene>